<organism>
    <name type="scientific">Streptococcus pyogenes serotype M6 (strain ATCC BAA-946 / MGAS10394)</name>
    <dbReference type="NCBI Taxonomy" id="286636"/>
    <lineage>
        <taxon>Bacteria</taxon>
        <taxon>Bacillati</taxon>
        <taxon>Bacillota</taxon>
        <taxon>Bacilli</taxon>
        <taxon>Lactobacillales</taxon>
        <taxon>Streptococcaceae</taxon>
        <taxon>Streptococcus</taxon>
    </lineage>
</organism>
<name>HUTI_STRP6</name>
<accession>Q5X9L1</accession>
<dbReference type="EC" id="3.5.2.7" evidence="1"/>
<dbReference type="EMBL" id="CP000003">
    <property type="protein sequence ID" value="AAT87902.1"/>
    <property type="status" value="ALT_INIT"/>
    <property type="molecule type" value="Genomic_DNA"/>
</dbReference>
<dbReference type="RefSeq" id="WP_021340207.1">
    <property type="nucleotide sequence ID" value="NC_006086.1"/>
</dbReference>
<dbReference type="SMR" id="Q5X9L1"/>
<dbReference type="KEGG" id="spa:M6_Spy1767"/>
<dbReference type="HOGENOM" id="CLU_041647_0_1_9"/>
<dbReference type="UniPathway" id="UPA00379">
    <property type="reaction ID" value="UER00551"/>
</dbReference>
<dbReference type="Proteomes" id="UP000001167">
    <property type="component" value="Chromosome"/>
</dbReference>
<dbReference type="GO" id="GO:0005737">
    <property type="term" value="C:cytoplasm"/>
    <property type="evidence" value="ECO:0007669"/>
    <property type="project" value="UniProtKB-SubCell"/>
</dbReference>
<dbReference type="GO" id="GO:0050480">
    <property type="term" value="F:imidazolonepropionase activity"/>
    <property type="evidence" value="ECO:0007669"/>
    <property type="project" value="UniProtKB-UniRule"/>
</dbReference>
<dbReference type="GO" id="GO:0005506">
    <property type="term" value="F:iron ion binding"/>
    <property type="evidence" value="ECO:0007669"/>
    <property type="project" value="UniProtKB-UniRule"/>
</dbReference>
<dbReference type="GO" id="GO:0008270">
    <property type="term" value="F:zinc ion binding"/>
    <property type="evidence" value="ECO:0007669"/>
    <property type="project" value="UniProtKB-UniRule"/>
</dbReference>
<dbReference type="GO" id="GO:0019556">
    <property type="term" value="P:L-histidine catabolic process to glutamate and formamide"/>
    <property type="evidence" value="ECO:0007669"/>
    <property type="project" value="UniProtKB-UniPathway"/>
</dbReference>
<dbReference type="GO" id="GO:0019557">
    <property type="term" value="P:L-histidine catabolic process to glutamate and formate"/>
    <property type="evidence" value="ECO:0007669"/>
    <property type="project" value="UniProtKB-UniPathway"/>
</dbReference>
<dbReference type="CDD" id="cd01296">
    <property type="entry name" value="Imidazolone-5PH"/>
    <property type="match status" value="1"/>
</dbReference>
<dbReference type="FunFam" id="3.20.20.140:FF:000007">
    <property type="entry name" value="Imidazolonepropionase"/>
    <property type="match status" value="1"/>
</dbReference>
<dbReference type="Gene3D" id="3.20.20.140">
    <property type="entry name" value="Metal-dependent hydrolases"/>
    <property type="match status" value="1"/>
</dbReference>
<dbReference type="Gene3D" id="2.30.40.10">
    <property type="entry name" value="Urease, subunit C, domain 1"/>
    <property type="match status" value="1"/>
</dbReference>
<dbReference type="HAMAP" id="MF_00372">
    <property type="entry name" value="HutI"/>
    <property type="match status" value="1"/>
</dbReference>
<dbReference type="InterPro" id="IPR006680">
    <property type="entry name" value="Amidohydro-rel"/>
</dbReference>
<dbReference type="InterPro" id="IPR005920">
    <property type="entry name" value="HutI"/>
</dbReference>
<dbReference type="InterPro" id="IPR011059">
    <property type="entry name" value="Metal-dep_hydrolase_composite"/>
</dbReference>
<dbReference type="InterPro" id="IPR032466">
    <property type="entry name" value="Metal_Hydrolase"/>
</dbReference>
<dbReference type="NCBIfam" id="TIGR01224">
    <property type="entry name" value="hutI"/>
    <property type="match status" value="1"/>
</dbReference>
<dbReference type="PANTHER" id="PTHR42752">
    <property type="entry name" value="IMIDAZOLONEPROPIONASE"/>
    <property type="match status" value="1"/>
</dbReference>
<dbReference type="PANTHER" id="PTHR42752:SF1">
    <property type="entry name" value="IMIDAZOLONEPROPIONASE-RELATED"/>
    <property type="match status" value="1"/>
</dbReference>
<dbReference type="Pfam" id="PF01979">
    <property type="entry name" value="Amidohydro_1"/>
    <property type="match status" value="1"/>
</dbReference>
<dbReference type="SUPFAM" id="SSF51338">
    <property type="entry name" value="Composite domain of metallo-dependent hydrolases"/>
    <property type="match status" value="1"/>
</dbReference>
<dbReference type="SUPFAM" id="SSF51556">
    <property type="entry name" value="Metallo-dependent hydrolases"/>
    <property type="match status" value="1"/>
</dbReference>
<feature type="chain" id="PRO_0000160968" description="Imidazolonepropionase">
    <location>
        <begin position="1"/>
        <end position="421"/>
    </location>
</feature>
<feature type="binding site" evidence="1">
    <location>
        <position position="81"/>
    </location>
    <ligand>
        <name>Fe(3+)</name>
        <dbReference type="ChEBI" id="CHEBI:29034"/>
    </ligand>
</feature>
<feature type="binding site" evidence="1">
    <location>
        <position position="81"/>
    </location>
    <ligand>
        <name>Zn(2+)</name>
        <dbReference type="ChEBI" id="CHEBI:29105"/>
    </ligand>
</feature>
<feature type="binding site" evidence="1">
    <location>
        <position position="83"/>
    </location>
    <ligand>
        <name>Fe(3+)</name>
        <dbReference type="ChEBI" id="CHEBI:29034"/>
    </ligand>
</feature>
<feature type="binding site" evidence="1">
    <location>
        <position position="83"/>
    </location>
    <ligand>
        <name>Zn(2+)</name>
        <dbReference type="ChEBI" id="CHEBI:29105"/>
    </ligand>
</feature>
<feature type="binding site" evidence="1">
    <location>
        <position position="90"/>
    </location>
    <ligand>
        <name>4-imidazolone-5-propanoate</name>
        <dbReference type="ChEBI" id="CHEBI:77893"/>
    </ligand>
</feature>
<feature type="binding site" evidence="1">
    <location>
        <position position="153"/>
    </location>
    <ligand>
        <name>4-imidazolone-5-propanoate</name>
        <dbReference type="ChEBI" id="CHEBI:77893"/>
    </ligand>
</feature>
<feature type="binding site" evidence="1">
    <location>
        <position position="153"/>
    </location>
    <ligand>
        <name>N-formimidoyl-L-glutamate</name>
        <dbReference type="ChEBI" id="CHEBI:58928"/>
    </ligand>
</feature>
<feature type="binding site" evidence="1">
    <location>
        <position position="186"/>
    </location>
    <ligand>
        <name>4-imidazolone-5-propanoate</name>
        <dbReference type="ChEBI" id="CHEBI:77893"/>
    </ligand>
</feature>
<feature type="binding site" evidence="1">
    <location>
        <position position="251"/>
    </location>
    <ligand>
        <name>Fe(3+)</name>
        <dbReference type="ChEBI" id="CHEBI:29034"/>
    </ligand>
</feature>
<feature type="binding site" evidence="1">
    <location>
        <position position="251"/>
    </location>
    <ligand>
        <name>Zn(2+)</name>
        <dbReference type="ChEBI" id="CHEBI:29105"/>
    </ligand>
</feature>
<feature type="binding site" evidence="1">
    <location>
        <position position="254"/>
    </location>
    <ligand>
        <name>4-imidazolone-5-propanoate</name>
        <dbReference type="ChEBI" id="CHEBI:77893"/>
    </ligand>
</feature>
<feature type="binding site" evidence="1">
    <location>
        <position position="326"/>
    </location>
    <ligand>
        <name>Fe(3+)</name>
        <dbReference type="ChEBI" id="CHEBI:29034"/>
    </ligand>
</feature>
<feature type="binding site" evidence="1">
    <location>
        <position position="326"/>
    </location>
    <ligand>
        <name>Zn(2+)</name>
        <dbReference type="ChEBI" id="CHEBI:29105"/>
    </ligand>
</feature>
<feature type="binding site" evidence="1">
    <location>
        <position position="328"/>
    </location>
    <ligand>
        <name>N-formimidoyl-L-glutamate</name>
        <dbReference type="ChEBI" id="CHEBI:58928"/>
    </ligand>
</feature>
<feature type="binding site" evidence="1">
    <location>
        <position position="330"/>
    </location>
    <ligand>
        <name>N-formimidoyl-L-glutamate</name>
        <dbReference type="ChEBI" id="CHEBI:58928"/>
    </ligand>
</feature>
<feature type="binding site" evidence="1">
    <location>
        <position position="331"/>
    </location>
    <ligand>
        <name>4-imidazolone-5-propanoate</name>
        <dbReference type="ChEBI" id="CHEBI:77893"/>
    </ligand>
</feature>
<proteinExistence type="inferred from homology"/>
<sequence>MVADVLLTHFNQLFCLNDPGHPLTGQEMKKATIVEDGYIAIKDGLIVALGSGEPDAELVGPQTIMRSYKGKIATPGIIDCHTHLVYGGSREHEFAKKLAGVPYLDILAQGGGILSTVRATRSASFDNLYQKSKRLLDYMLLHGVTTVEAKSGYGLDWETEKRQLDVVAALEKDHPIDLVSTFMAAHAIPEEYKGNPKAYLDVIIKDMLPVVKEKNLAEFCDIFCEKNVFTADESRYLLSKAKEMGFKLRIHADEIASIGGVDVAAELSAVSAEHLMMITNDGIAKLIGAGVIGNLLPATTFSLMEDTYAPARKMIDAGMAITLSTDSNPGSCPTANMQFVMQLGCFMLRLTPIEVLNAVTINAAYSVNRQERVGSLTVGKEADIAIFDAPNIDYLFYFFATNLIHQVYKKGQLTVDRGRIL</sequence>
<evidence type="ECO:0000255" key="1">
    <source>
        <dbReference type="HAMAP-Rule" id="MF_00372"/>
    </source>
</evidence>
<evidence type="ECO:0000305" key="2"/>
<protein>
    <recommendedName>
        <fullName evidence="1">Imidazolonepropionase</fullName>
        <ecNumber evidence="1">3.5.2.7</ecNumber>
    </recommendedName>
    <alternativeName>
        <fullName evidence="1">Imidazolone-5-propionate hydrolase</fullName>
    </alternativeName>
</protein>
<comment type="function">
    <text evidence="1">Catalyzes the hydrolytic cleavage of the carbon-nitrogen bond in imidazolone-5-propanoate to yield N-formimidoyl-L-glutamate. It is the third step in the universal histidine degradation pathway.</text>
</comment>
<comment type="catalytic activity">
    <reaction evidence="1">
        <text>4-imidazolone-5-propanoate + H2O = N-formimidoyl-L-glutamate</text>
        <dbReference type="Rhea" id="RHEA:23660"/>
        <dbReference type="ChEBI" id="CHEBI:15377"/>
        <dbReference type="ChEBI" id="CHEBI:58928"/>
        <dbReference type="ChEBI" id="CHEBI:77893"/>
        <dbReference type="EC" id="3.5.2.7"/>
    </reaction>
</comment>
<comment type="cofactor">
    <cofactor evidence="1">
        <name>Zn(2+)</name>
        <dbReference type="ChEBI" id="CHEBI:29105"/>
    </cofactor>
    <cofactor evidence="1">
        <name>Fe(3+)</name>
        <dbReference type="ChEBI" id="CHEBI:29034"/>
    </cofactor>
    <text evidence="1">Binds 1 zinc or iron ion per subunit.</text>
</comment>
<comment type="pathway">
    <text evidence="1">Amino-acid degradation; L-histidine degradation into L-glutamate; N-formimidoyl-L-glutamate from L-histidine: step 3/3.</text>
</comment>
<comment type="subcellular location">
    <subcellularLocation>
        <location evidence="1">Cytoplasm</location>
    </subcellularLocation>
</comment>
<comment type="similarity">
    <text evidence="1">Belongs to the metallo-dependent hydrolases superfamily. HutI family.</text>
</comment>
<comment type="sequence caution" evidence="2">
    <conflict type="erroneous initiation">
        <sequence resource="EMBL-CDS" id="AAT87902"/>
    </conflict>
</comment>
<reference key="1">
    <citation type="journal article" date="2004" name="J. Infect. Dis.">
        <title>Progress toward characterization of the group A Streptococcus metagenome: complete genome sequence of a macrolide-resistant serotype M6 strain.</title>
        <authorList>
            <person name="Banks D.J."/>
            <person name="Porcella S.F."/>
            <person name="Barbian K.D."/>
            <person name="Beres S.B."/>
            <person name="Philips L.E."/>
            <person name="Voyich J.M."/>
            <person name="DeLeo F.R."/>
            <person name="Martin J.M."/>
            <person name="Somerville G.A."/>
            <person name="Musser J.M."/>
        </authorList>
    </citation>
    <scope>NUCLEOTIDE SEQUENCE [LARGE SCALE GENOMIC DNA]</scope>
    <source>
        <strain>ATCC BAA-946 / MGAS10394</strain>
    </source>
</reference>
<keyword id="KW-0963">Cytoplasm</keyword>
<keyword id="KW-0369">Histidine metabolism</keyword>
<keyword id="KW-0378">Hydrolase</keyword>
<keyword id="KW-0408">Iron</keyword>
<keyword id="KW-0479">Metal-binding</keyword>
<keyword id="KW-0862">Zinc</keyword>
<gene>
    <name evidence="1" type="primary">hutI</name>
    <name type="ordered locus">M6_Spy1767</name>
</gene>